<sequence length="326" mass="37851">MSHQLTFADSEFSSKRRQTRKEIFLSRMEQILPWQNMVEVIEPFYPKAGNGRRPYPLETMLRIHCMQHWYNLSDGAMEDALYEIASMRLFARLSLDSALPDRTTIMNFRHLLEQHQLARQLFKTINRWLAEAGVMMTQGTLVDATIIEAPSSTKNKEQQRDPEMHQTKKGNQWHFGMKAHIGVDAKSGLTHSLVTTAANEHDLNQLGNLLHGEEQFVSADAGYQGAPQREELAEVDVDWLIAERPGKVRTLKQHPRKNKTAINIEYMKASIRARVEHPFRIIKRQFGFVKARYKGLLKNDNQLAMLFTLANLFRADQMIRQWERSH</sequence>
<gene>
    <name type="primary">insH3</name>
    <name type="ordered locus">b0656</name>
    <name type="ordered locus">JW0652</name>
</gene>
<feature type="chain" id="PRO_0000392482" description="Transposase InsH for insertion sequence element IS5D">
    <location>
        <begin position="1"/>
        <end position="326"/>
    </location>
</feature>
<dbReference type="EMBL" id="U82598">
    <property type="protein sequence ID" value="AAB40858.1"/>
    <property type="status" value="ALT_INIT"/>
    <property type="molecule type" value="Genomic_DNA"/>
</dbReference>
<dbReference type="EMBL" id="U00096">
    <property type="protein sequence ID" value="AAC73757.2"/>
    <property type="molecule type" value="Genomic_DNA"/>
</dbReference>
<dbReference type="EMBL" id="AP009048">
    <property type="protein sequence ID" value="BAE76356.1"/>
    <property type="status" value="ALT_INIT"/>
    <property type="molecule type" value="Genomic_DNA"/>
</dbReference>
<dbReference type="RefSeq" id="NP_414793.1">
    <property type="nucleotide sequence ID" value="NC_000913.3"/>
</dbReference>
<dbReference type="RefSeq" id="NP_415084.1">
    <property type="nucleotide sequence ID" value="NC_000913.3"/>
</dbReference>
<dbReference type="RefSeq" id="NP_415189.1">
    <property type="nucleotide sequence ID" value="NC_000913.3"/>
</dbReference>
<dbReference type="RefSeq" id="NP_415847.1">
    <property type="nucleotide sequence ID" value="NC_000913.3"/>
</dbReference>
<dbReference type="RefSeq" id="NP_416535.1">
    <property type="nucleotide sequence ID" value="NC_000913.3"/>
</dbReference>
<dbReference type="RefSeq" id="NP_416696.1">
    <property type="nucleotide sequence ID" value="NC_000913.3"/>
</dbReference>
<dbReference type="RefSeq" id="NP_417456.1">
    <property type="nucleotide sequence ID" value="NC_000913.3"/>
</dbReference>
<dbReference type="RefSeq" id="NP_417685.1">
    <property type="nucleotide sequence ID" value="NC_000913.3"/>
</dbReference>
<dbReference type="RefSeq" id="NP_417962.1">
    <property type="nucleotide sequence ID" value="NC_000913.3"/>
</dbReference>
<dbReference type="RefSeq" id="WP_000019403.1">
    <property type="nucleotide sequence ID" value="NZ_SSZK01000120.1"/>
</dbReference>
<dbReference type="FunCoup" id="P0CE51">
    <property type="interactions" value="12"/>
</dbReference>
<dbReference type="jPOST" id="P0CE51"/>
<dbReference type="EnsemblBacteria" id="AAC73757">
    <property type="protein sequence ID" value="AAC73757"/>
    <property type="gene ID" value="b0656"/>
</dbReference>
<dbReference type="GeneID" id="944917"/>
<dbReference type="KEGG" id="ecj:JW0652"/>
<dbReference type="KEGG" id="eco:b0259"/>
<dbReference type="KEGG" id="eco:b0552"/>
<dbReference type="KEGG" id="eco:b0656"/>
<dbReference type="KEGG" id="eco:b2030"/>
<dbReference type="KEGG" id="eco:b2192"/>
<dbReference type="KEGG" id="eco:b2982"/>
<dbReference type="KEGG" id="eco:b3218"/>
<dbReference type="KEGG" id="eco:b3505"/>
<dbReference type="KEGG" id="eco:b4711"/>
<dbReference type="KEGG" id="ecoc:C3026_01250"/>
<dbReference type="KEGG" id="ecoc:C3026_02730"/>
<dbReference type="KEGG" id="ecoc:C3026_03280"/>
<dbReference type="KEGG" id="ecoc:C3026_07795"/>
<dbReference type="KEGG" id="ecoc:C3026_10760"/>
<dbReference type="KEGG" id="ecoc:C3026_11440"/>
<dbReference type="KEGG" id="ecoc:C3026_12250"/>
<dbReference type="KEGG" id="ecoc:C3026_16315"/>
<dbReference type="KEGG" id="ecoc:C3026_17505"/>
<dbReference type="KEGG" id="ecoc:C3026_18985"/>
<dbReference type="KEGG" id="ecoc:C3026_23975"/>
<dbReference type="EchoBASE" id="EB4718"/>
<dbReference type="HOGENOM" id="CLU_049873_1_2_6"/>
<dbReference type="InParanoid" id="P0CE51"/>
<dbReference type="PhylomeDB" id="P0CE51"/>
<dbReference type="BioCyc" id="EcoCyc:MONOMER0-4235"/>
<dbReference type="PRO" id="PR:P0CE51"/>
<dbReference type="Proteomes" id="UP000000625">
    <property type="component" value="Chromosome"/>
</dbReference>
<dbReference type="GO" id="GO:0005829">
    <property type="term" value="C:cytosol"/>
    <property type="evidence" value="ECO:0000318"/>
    <property type="project" value="GO_Central"/>
</dbReference>
<dbReference type="GO" id="GO:0003677">
    <property type="term" value="F:DNA binding"/>
    <property type="evidence" value="ECO:0007669"/>
    <property type="project" value="UniProtKB-KW"/>
</dbReference>
<dbReference type="GO" id="GO:0004803">
    <property type="term" value="F:transposase activity"/>
    <property type="evidence" value="ECO:0000318"/>
    <property type="project" value="GO_Central"/>
</dbReference>
<dbReference type="GO" id="GO:0006313">
    <property type="term" value="P:DNA transposition"/>
    <property type="evidence" value="ECO:0000318"/>
    <property type="project" value="GO_Central"/>
</dbReference>
<dbReference type="InterPro" id="IPR047959">
    <property type="entry name" value="Transpos_IS5"/>
</dbReference>
<dbReference type="InterPro" id="IPR002559">
    <property type="entry name" value="Transposase_11"/>
</dbReference>
<dbReference type="InterPro" id="IPR008490">
    <property type="entry name" value="Transposase_InsH_N"/>
</dbReference>
<dbReference type="NCBIfam" id="NF033581">
    <property type="entry name" value="transpos_IS5_4"/>
    <property type="match status" value="1"/>
</dbReference>
<dbReference type="PANTHER" id="PTHR35604">
    <property type="entry name" value="TRANSPOSASE INSH FOR INSERTION SEQUENCE ELEMENT IS5A-RELATED"/>
    <property type="match status" value="1"/>
</dbReference>
<dbReference type="PANTHER" id="PTHR35604:SF2">
    <property type="entry name" value="TRANSPOSASE INSH FOR INSERTION SEQUENCE ELEMENT IS5A-RELATED"/>
    <property type="match status" value="1"/>
</dbReference>
<dbReference type="Pfam" id="PF01609">
    <property type="entry name" value="DDE_Tnp_1"/>
    <property type="match status" value="1"/>
</dbReference>
<dbReference type="Pfam" id="PF05598">
    <property type="entry name" value="DUF772"/>
    <property type="match status" value="1"/>
</dbReference>
<organism>
    <name type="scientific">Escherichia coli (strain K12)</name>
    <dbReference type="NCBI Taxonomy" id="83333"/>
    <lineage>
        <taxon>Bacteria</taxon>
        <taxon>Pseudomonadati</taxon>
        <taxon>Pseudomonadota</taxon>
        <taxon>Gammaproteobacteria</taxon>
        <taxon>Enterobacterales</taxon>
        <taxon>Enterobacteriaceae</taxon>
        <taxon>Escherichia</taxon>
    </lineage>
</organism>
<comment type="function">
    <text>Involved in the transposition of the insertion sequence IS5.</text>
</comment>
<comment type="similarity">
    <text evidence="1">Belongs to the transposase 11 family.</text>
</comment>
<comment type="sequence caution" evidence="1">
    <conflict type="erroneous initiation">
        <sequence resource="EMBL-CDS" id="AAB40858"/>
    </conflict>
    <text>Extended N-terminus.</text>
</comment>
<comment type="sequence caution" evidence="1">
    <conflict type="erroneous initiation">
        <sequence resource="EMBL-CDS" id="BAE76356"/>
    </conflict>
    <text>Extended N-terminus.</text>
</comment>
<keyword id="KW-0233">DNA recombination</keyword>
<keyword id="KW-0238">DNA-binding</keyword>
<keyword id="KW-1185">Reference proteome</keyword>
<keyword id="KW-0814">Transposable element</keyword>
<keyword id="KW-0815">Transposition</keyword>
<reference key="1">
    <citation type="journal article" date="1994" name="Nucleic Acids Res.">
        <title>Analysis of the Escherichia coli genome. V. DNA sequence of the region from 76.0 to 81.5 minutes.</title>
        <authorList>
            <person name="Sofia H.J."/>
            <person name="Burland V."/>
            <person name="Daniels D.L."/>
            <person name="Plunkett G. III"/>
            <person name="Blattner F.R."/>
        </authorList>
    </citation>
    <scope>NUCLEOTIDE SEQUENCE [LARGE SCALE GENOMIC DNA]</scope>
    <source>
        <strain>K12 / MG1655 / ATCC 47076</strain>
    </source>
</reference>
<reference key="2">
    <citation type="journal article" date="1996" name="DNA Res.">
        <title>A 570-kb DNA sequence of the Escherichia coli K-12 genome corresponding to the 28.0-40.1 min region on the linkage map.</title>
        <authorList>
            <person name="Aiba H."/>
            <person name="Baba T."/>
            <person name="Fujita K."/>
            <person name="Hayashi K."/>
            <person name="Inada T."/>
            <person name="Isono K."/>
            <person name="Itoh T."/>
            <person name="Kasai H."/>
            <person name="Kashimoto K."/>
            <person name="Kimura S."/>
            <person name="Kitakawa M."/>
            <person name="Kitagawa M."/>
            <person name="Makino K."/>
            <person name="Miki T."/>
            <person name="Mizobuchi K."/>
            <person name="Mori H."/>
            <person name="Mori T."/>
            <person name="Motomura K."/>
            <person name="Nakade S."/>
            <person name="Nakamura Y."/>
            <person name="Nashimoto H."/>
            <person name="Nishio Y."/>
            <person name="Oshima T."/>
            <person name="Saito N."/>
            <person name="Sampei G."/>
            <person name="Seki Y."/>
            <person name="Sivasundaram S."/>
            <person name="Tagami H."/>
            <person name="Takeda J."/>
            <person name="Takemoto K."/>
            <person name="Takeuchi Y."/>
            <person name="Wada C."/>
            <person name="Yamamoto Y."/>
            <person name="Horiuchi T."/>
        </authorList>
    </citation>
    <scope>NUCLEOTIDE SEQUENCE [LARGE SCALE GENOMIC DNA]</scope>
    <source>
        <strain>K12 / W3110 / ATCC 27325 / DSM 5911</strain>
    </source>
</reference>
<reference key="3">
    <citation type="journal article" date="1996" name="DNA Res.">
        <title>A 460-kb DNA sequence of the Escherichia coli K-12 genome corresponding to the 40.1-50.0 min region on the linkage map.</title>
        <authorList>
            <person name="Itoh T."/>
            <person name="Aiba H."/>
            <person name="Baba T."/>
            <person name="Fujita K."/>
            <person name="Hayashi K."/>
            <person name="Inada T."/>
            <person name="Isono K."/>
            <person name="Kasai H."/>
            <person name="Kimura S."/>
            <person name="Kitakawa M."/>
            <person name="Kitagawa M."/>
            <person name="Makino K."/>
            <person name="Miki T."/>
            <person name="Mizobuchi K."/>
            <person name="Mori H."/>
            <person name="Mori T."/>
            <person name="Motomura K."/>
            <person name="Nakade S."/>
            <person name="Nakamura Y."/>
            <person name="Nashimoto H."/>
            <person name="Nishio Y."/>
            <person name="Oshima T."/>
            <person name="Saito N."/>
            <person name="Sampei G."/>
            <person name="Seki Y."/>
            <person name="Sivasundaram S."/>
            <person name="Tagami H."/>
            <person name="Takeda J."/>
            <person name="Takemoto K."/>
            <person name="Wada C."/>
            <person name="Yamamoto Y."/>
            <person name="Horiuchi T."/>
        </authorList>
    </citation>
    <scope>NUCLEOTIDE SEQUENCE [LARGE SCALE GENOMIC DNA]</scope>
    <source>
        <strain>K12 / W3110 / ATCC 27325 / DSM 5911</strain>
    </source>
</reference>
<reference key="4">
    <citation type="submission" date="1997-01" db="EMBL/GenBank/DDBJ databases">
        <title>Sequence of minutes 4-25 of Escherichia coli.</title>
        <authorList>
            <person name="Chung E."/>
            <person name="Allen E."/>
            <person name="Araujo R."/>
            <person name="Aparicio A.M."/>
            <person name="Davis K."/>
            <person name="Duncan M."/>
            <person name="Federspiel N."/>
            <person name="Hyman R."/>
            <person name="Kalman S."/>
            <person name="Komp C."/>
            <person name="Kurdi O."/>
            <person name="Lew H."/>
            <person name="Lin D."/>
            <person name="Namath A."/>
            <person name="Oefner P."/>
            <person name="Roberts D."/>
            <person name="Schramm S."/>
            <person name="Davis R.W."/>
        </authorList>
    </citation>
    <scope>NUCLEOTIDE SEQUENCE [LARGE SCALE GENOMIC DNA]</scope>
    <source>
        <strain>K12 / MG1655 / ATCC 47076</strain>
    </source>
</reference>
<reference key="5">
    <citation type="journal article" date="1997" name="Science">
        <title>The complete genome sequence of Escherichia coli K-12.</title>
        <authorList>
            <person name="Blattner F.R."/>
            <person name="Plunkett G. III"/>
            <person name="Bloch C.A."/>
            <person name="Perna N.T."/>
            <person name="Burland V."/>
            <person name="Riley M."/>
            <person name="Collado-Vides J."/>
            <person name="Glasner J.D."/>
            <person name="Rode C.K."/>
            <person name="Mayhew G.F."/>
            <person name="Gregor J."/>
            <person name="Davis N.W."/>
            <person name="Kirkpatrick H.A."/>
            <person name="Goeden M.A."/>
            <person name="Rose D.J."/>
            <person name="Mau B."/>
            <person name="Shao Y."/>
        </authorList>
    </citation>
    <scope>NUCLEOTIDE SEQUENCE [LARGE SCALE GENOMIC DNA]</scope>
    <source>
        <strain>K12 / MG1655 / ATCC 47076</strain>
    </source>
</reference>
<reference key="6">
    <citation type="journal article" date="2006" name="Mol. Syst. Biol.">
        <title>Highly accurate genome sequences of Escherichia coli K-12 strains MG1655 and W3110.</title>
        <authorList>
            <person name="Hayashi K."/>
            <person name="Morooka N."/>
            <person name="Yamamoto Y."/>
            <person name="Fujita K."/>
            <person name="Isono K."/>
            <person name="Choi S."/>
            <person name="Ohtsubo E."/>
            <person name="Baba T."/>
            <person name="Wanner B.L."/>
            <person name="Mori H."/>
            <person name="Horiuchi T."/>
        </authorList>
    </citation>
    <scope>NUCLEOTIDE SEQUENCE [LARGE SCALE GENOMIC DNA]</scope>
    <source>
        <strain>K12 / W3110 / ATCC 27325 / DSM 5911</strain>
    </source>
</reference>
<accession>P0CE51</accession>
<accession>O07987</accession>
<accession>O07988</accession>
<accession>P03837</accession>
<accession>P76355</accession>
<accession>Q2MBK1</accession>
<accession>Q2MBM8</accession>
<proteinExistence type="inferred from homology"/>
<protein>
    <recommendedName>
        <fullName>Transposase InsH for insertion sequence element IS5D</fullName>
    </recommendedName>
</protein>
<evidence type="ECO:0000305" key="1"/>
<name>INSH3_ECOLI</name>